<accession>Q9QUN3</accession>
<accession>O88504</accession>
<name>BLNK_MOUSE</name>
<comment type="function">
    <text evidence="8 9 12">Functions as a central linker protein, downstream of the B-cell receptor (BCR), bridging the SYK kinase to a multitude of signaling pathways and regulating biological outcomes of B-cell function and development. Plays a role in the activation of ERK/EPHB2, MAP kinase p38 and JNK. Modulates AP1 activation. Important for the activation of NF-kappa-B and NFAT. Plays an important role in BCR-mediated PLCG1 and PLCG2 activation and Ca(2+) mobilization and is required for trafficking of the BCR to late endosomes. However, does not seem to be required for pre-BCR-mediated activation of MAP kinase and phosphatidyl-inositol 3 (PI3) kinase signaling. May be required for the RAC1-JNK pathway. Plays a critical role in orchestrating the pro-B cell to pre-B cell transition. May play an important role in BCR-induced B-cell apoptosis.</text>
</comment>
<comment type="subunit">
    <text evidence="1 5 6 7 9 10 11 12">Associates with PLCG1, VAV1 and NCK1 in a B-cell antigen receptor-dependent fashion. Interacts with VAV3, PLCG2 and GRB2 (By similarity). Interacts through its SH2 domain with CD79A. Interacts (via SH2 domain) with SYK; phosphorylated and activated by SYK. Interacts (via SH2 domain) with SCIMP; this interaction is dependent on phosphorylation of SCIMP 'Tyr-120' (PubMed:21930792, PubMed:28290451).</text>
</comment>
<comment type="subcellular location">
    <subcellularLocation>
        <location evidence="1">Cytoplasm</location>
    </subcellularLocation>
    <subcellularLocation>
        <location evidence="1">Cell membrane</location>
    </subcellularLocation>
    <text evidence="1">BCR activation results in the translocation to membrane fraction.</text>
</comment>
<comment type="tissue specificity">
    <text evidence="12">Expressed in the spleen and weakly in thymus, no expression was seen in liver, testis, or brain. Expressed in B-cell lines representing different developmental stages from the pre-B to the plasma cell stage, but not in a T-cell or a fibroblast cell line.</text>
</comment>
<comment type="PTM">
    <text evidence="1 12">Following BCR activation, phosphorylated on tyrosine residues by SYK and LYN. When phosphorylated, serves as a scaffold to assemble downstream targets of antigen activation, including PLCG1, VAV1, GRB2 and NCK1. Phosphorylation of Tyr-84, Tyr-178 and Tyr-189 facilitates PLCG1 binding. Phosphorylation of Tyr-72 facilitates VAV1 and NCK1 binding. Phosphorylation is required for both Ca(2+) and MAPK signaling pathways (By similarity). Phosphorylation of Tyr-96 is required for the binding of BTK.</text>
</comment>
<proteinExistence type="evidence at protein level"/>
<sequence>MDKLNKITVPASQKLRQLQKMVHDIKNNEGGIMDKIKKLKVKGPPSVPRRDYALDSPADEEEQWSDDFDSDYENPDEHSDSEMYVMPAEETGDDSYEPPPAEQQTRVVHPALPFTRGEYVDNRSSQRHSPPFSKTLPSKPSWPSAKARLASTLPAPNSLQKPQVPPKPKDLLEDEADYVVPVEDNDENYIHPRESSPPPAEKAPMVNRSTKPNSSSKHMSPPGTVAGRNSGVWDSKSSLPAAPSPLPRAGKKPATPLKTTPVPPLPNASNVCEEKPVPAERHRGSSHRQDTVQSPVFPPTQKPVHQKPVPLPRFPEAGSPAADGPFHSFPFNSTFADQEAELLGKPWYAGACDRKSAEEALHRSNKDGSFLIRKSSGHDSKQPYTLVAFFNKRVYNIPVRFIEATKQYALGKKKNGEEYFGSVVEIVNSHQHNPLVLIDSQNNTKDSTRLKYAVKVS</sequence>
<keyword id="KW-0002">3D-structure</keyword>
<keyword id="KW-0075">B-cell activation</keyword>
<keyword id="KW-1003">Cell membrane</keyword>
<keyword id="KW-0963">Cytoplasm</keyword>
<keyword id="KW-0903">Direct protein sequencing</keyword>
<keyword id="KW-0472">Membrane</keyword>
<keyword id="KW-0597">Phosphoprotein</keyword>
<keyword id="KW-1185">Reference proteome</keyword>
<keyword id="KW-0727">SH2 domain</keyword>
<dbReference type="EMBL" id="AF068182">
    <property type="protein sequence ID" value="AAC40206.1"/>
    <property type="molecule type" value="mRNA"/>
</dbReference>
<dbReference type="EMBL" id="Y17159">
    <property type="protein sequence ID" value="CAA76666.1"/>
    <property type="molecule type" value="mRNA"/>
</dbReference>
<dbReference type="EMBL" id="AB015290">
    <property type="protein sequence ID" value="BAA34944.1"/>
    <property type="molecule type" value="mRNA"/>
</dbReference>
<dbReference type="EMBL" id="AJ298054">
    <property type="protein sequence ID" value="CAC18565.1"/>
    <property type="molecule type" value="Genomic_DNA"/>
</dbReference>
<dbReference type="EMBL" id="BC059785">
    <property type="protein sequence ID" value="AAH59785.1"/>
    <property type="molecule type" value="mRNA"/>
</dbReference>
<dbReference type="CCDS" id="CCDS37983.1"/>
<dbReference type="RefSeq" id="NP_032554.2">
    <property type="nucleotide sequence ID" value="NM_008528.4"/>
</dbReference>
<dbReference type="PDB" id="2EO6">
    <property type="method" value="NMR"/>
    <property type="chains" value="A=330-457"/>
</dbReference>
<dbReference type="PDBsum" id="2EO6"/>
<dbReference type="SMR" id="Q9QUN3"/>
<dbReference type="BioGRID" id="201236">
    <property type="interactions" value="6"/>
</dbReference>
<dbReference type="CORUM" id="Q9QUN3"/>
<dbReference type="FunCoup" id="Q9QUN3">
    <property type="interactions" value="1254"/>
</dbReference>
<dbReference type="IntAct" id="Q9QUN3">
    <property type="interactions" value="7"/>
</dbReference>
<dbReference type="MINT" id="Q9QUN3"/>
<dbReference type="STRING" id="10090.ENSMUSP00000057844"/>
<dbReference type="iPTMnet" id="Q9QUN3"/>
<dbReference type="PhosphoSitePlus" id="Q9QUN3"/>
<dbReference type="PaxDb" id="10090-ENSMUSP00000057844"/>
<dbReference type="PeptideAtlas" id="Q9QUN3"/>
<dbReference type="ProteomicsDB" id="265305"/>
<dbReference type="Antibodypedia" id="3990">
    <property type="antibodies" value="740 antibodies from 41 providers"/>
</dbReference>
<dbReference type="DNASU" id="17060"/>
<dbReference type="Ensembl" id="ENSMUST00000054769.7">
    <property type="protein sequence ID" value="ENSMUSP00000057844.7"/>
    <property type="gene ID" value="ENSMUSG00000061132.14"/>
</dbReference>
<dbReference type="GeneID" id="17060"/>
<dbReference type="KEGG" id="mmu:17060"/>
<dbReference type="UCSC" id="uc008hll.1">
    <property type="organism name" value="mouse"/>
</dbReference>
<dbReference type="AGR" id="MGI:96878"/>
<dbReference type="CTD" id="29760"/>
<dbReference type="MGI" id="MGI:96878">
    <property type="gene designation" value="Blnk"/>
</dbReference>
<dbReference type="VEuPathDB" id="HostDB:ENSMUSG00000061132"/>
<dbReference type="eggNOG" id="ENOG502QUXR">
    <property type="taxonomic scope" value="Eukaryota"/>
</dbReference>
<dbReference type="GeneTree" id="ENSGT00940000155715"/>
<dbReference type="HOGENOM" id="CLU_043673_0_0_1"/>
<dbReference type="InParanoid" id="Q9QUN3"/>
<dbReference type="OMA" id="ELLEDEX"/>
<dbReference type="OrthoDB" id="10044490at2759"/>
<dbReference type="PhylomeDB" id="Q9QUN3"/>
<dbReference type="TreeFam" id="TF326567"/>
<dbReference type="Reactome" id="R-MMU-983695">
    <property type="pathway name" value="Antigen activates B Cell Receptor (BCR) leading to generation of second messengers"/>
</dbReference>
<dbReference type="BioGRID-ORCS" id="17060">
    <property type="hits" value="1 hit in 77 CRISPR screens"/>
</dbReference>
<dbReference type="ChiTaRS" id="Blnk">
    <property type="organism name" value="mouse"/>
</dbReference>
<dbReference type="EvolutionaryTrace" id="Q9QUN3"/>
<dbReference type="PRO" id="PR:Q9QUN3"/>
<dbReference type="Proteomes" id="UP000000589">
    <property type="component" value="Chromosome 19"/>
</dbReference>
<dbReference type="RNAct" id="Q9QUN3">
    <property type="molecule type" value="protein"/>
</dbReference>
<dbReference type="Bgee" id="ENSMUSG00000061132">
    <property type="expression patterns" value="Expressed in spleen and 123 other cell types or tissues"/>
</dbReference>
<dbReference type="ExpressionAtlas" id="Q9QUN3">
    <property type="expression patterns" value="baseline and differential"/>
</dbReference>
<dbReference type="GO" id="GO:0005737">
    <property type="term" value="C:cytoplasm"/>
    <property type="evidence" value="ECO:0000314"/>
    <property type="project" value="MGI"/>
</dbReference>
<dbReference type="GO" id="GO:0005829">
    <property type="term" value="C:cytosol"/>
    <property type="evidence" value="ECO:0007669"/>
    <property type="project" value="Ensembl"/>
</dbReference>
<dbReference type="GO" id="GO:0043231">
    <property type="term" value="C:intracellular membrane-bounded organelle"/>
    <property type="evidence" value="ECO:0007669"/>
    <property type="project" value="Ensembl"/>
</dbReference>
<dbReference type="GO" id="GO:0005886">
    <property type="term" value="C:plasma membrane"/>
    <property type="evidence" value="ECO:0007669"/>
    <property type="project" value="UniProtKB-SubCell"/>
</dbReference>
<dbReference type="GO" id="GO:0008289">
    <property type="term" value="F:lipid binding"/>
    <property type="evidence" value="ECO:0007669"/>
    <property type="project" value="Ensembl"/>
</dbReference>
<dbReference type="GO" id="GO:0140693">
    <property type="term" value="F:molecular condensate scaffold activity"/>
    <property type="evidence" value="ECO:0007669"/>
    <property type="project" value="Ensembl"/>
</dbReference>
<dbReference type="GO" id="GO:0043274">
    <property type="term" value="F:phospholipase binding"/>
    <property type="evidence" value="ECO:0007669"/>
    <property type="project" value="Ensembl"/>
</dbReference>
<dbReference type="GO" id="GO:1990782">
    <property type="term" value="F:protein tyrosine kinase binding"/>
    <property type="evidence" value="ECO:0007669"/>
    <property type="project" value="Ensembl"/>
</dbReference>
<dbReference type="GO" id="GO:0042169">
    <property type="term" value="F:SH2 domain binding"/>
    <property type="evidence" value="ECO:0007669"/>
    <property type="project" value="Ensembl"/>
</dbReference>
<dbReference type="GO" id="GO:0035591">
    <property type="term" value="F:signaling adaptor activity"/>
    <property type="evidence" value="ECO:0007669"/>
    <property type="project" value="Ensembl"/>
</dbReference>
<dbReference type="GO" id="GO:0042113">
    <property type="term" value="P:B cell activation"/>
    <property type="evidence" value="ECO:0007669"/>
    <property type="project" value="UniProtKB-KW"/>
</dbReference>
<dbReference type="GO" id="GO:0050853">
    <property type="term" value="P:B cell receptor signaling pathway"/>
    <property type="evidence" value="ECO:0007669"/>
    <property type="project" value="Ensembl"/>
</dbReference>
<dbReference type="GO" id="GO:0035556">
    <property type="term" value="P:intracellular signal transduction"/>
    <property type="evidence" value="ECO:0007669"/>
    <property type="project" value="Ensembl"/>
</dbReference>
<dbReference type="GO" id="GO:0010628">
    <property type="term" value="P:positive regulation of gene expression"/>
    <property type="evidence" value="ECO:0000315"/>
    <property type="project" value="ARUK-UCL"/>
</dbReference>
<dbReference type="CDD" id="cd09929">
    <property type="entry name" value="SH2_BLNK_SLP-76"/>
    <property type="match status" value="1"/>
</dbReference>
<dbReference type="FunFam" id="3.30.505.10:FF:000016">
    <property type="entry name" value="B-cell linker protein isoform 2"/>
    <property type="match status" value="1"/>
</dbReference>
<dbReference type="Gene3D" id="3.30.505.10">
    <property type="entry name" value="SH2 domain"/>
    <property type="match status" value="1"/>
</dbReference>
<dbReference type="InterPro" id="IPR051751">
    <property type="entry name" value="Immunoreceptor_sig_adapters"/>
</dbReference>
<dbReference type="InterPro" id="IPR000980">
    <property type="entry name" value="SH2"/>
</dbReference>
<dbReference type="InterPro" id="IPR036860">
    <property type="entry name" value="SH2_dom_sf"/>
</dbReference>
<dbReference type="PANTHER" id="PTHR14098:SF3">
    <property type="entry name" value="B-CELL LINKER PROTEIN"/>
    <property type="match status" value="1"/>
</dbReference>
<dbReference type="PANTHER" id="PTHR14098">
    <property type="entry name" value="SH2 DOMAIN CONTAINING PROTEIN"/>
    <property type="match status" value="1"/>
</dbReference>
<dbReference type="Pfam" id="PF00017">
    <property type="entry name" value="SH2"/>
    <property type="match status" value="1"/>
</dbReference>
<dbReference type="SMART" id="SM00252">
    <property type="entry name" value="SH2"/>
    <property type="match status" value="1"/>
</dbReference>
<dbReference type="SUPFAM" id="SSF55550">
    <property type="entry name" value="SH2 domain"/>
    <property type="match status" value="1"/>
</dbReference>
<dbReference type="PROSITE" id="PS50001">
    <property type="entry name" value="SH2"/>
    <property type="match status" value="1"/>
</dbReference>
<reference key="1">
    <citation type="journal article" date="1998" name="Immunity">
        <title>BLNK: a central linker protein in B cell activation.</title>
        <authorList>
            <person name="Fu C."/>
            <person name="Turck C.W."/>
            <person name="Kurosaki T."/>
            <person name="Chan A.C."/>
        </authorList>
    </citation>
    <scope>NUCLEOTIDE SEQUENCE [MRNA]</scope>
</reference>
<reference key="2">
    <citation type="journal article" date="1998" name="J. Exp. Med.">
        <title>SLP-65: a new signaling component in B lymphocytes which requires expression of the antigen receptor for phosphorylation.</title>
        <authorList>
            <person name="Wienands J."/>
            <person name="Schweikert J."/>
            <person name="Wollschied B."/>
            <person name="Jumaa H."/>
            <person name="Nielsen P.J."/>
            <person name="Reth M."/>
        </authorList>
    </citation>
    <scope>NUCLEOTIDE SEQUENCE [MRNA]</scope>
    <scope>PROTEIN SEQUENCE OF 7-20; 147-161; 170-186; 356-366 AND 393-412</scope>
    <scope>FUNCTION</scope>
    <scope>TISSUE SPECIFICITY</scope>
    <scope>PHOSPHORYLATION</scope>
    <scope>INTERACTION WITH VAV1 AND GRB2</scope>
    <source>
        <strain>BALB/cJ</strain>
        <tissue>Lymphoid tissue</tissue>
    </source>
</reference>
<reference key="3">
    <citation type="submission" date="1998-06" db="EMBL/GenBank/DDBJ databases">
        <title>BASH: B lymphocyte adaptor protein containing SH2 domain.</title>
        <authorList>
            <person name="Okamoto N."/>
            <person name="Hayashi K."/>
            <person name="Tsuji S."/>
            <person name="Goitsuka R."/>
            <person name="Kitamura D."/>
        </authorList>
    </citation>
    <scope>NUCLEOTIDE SEQUENCE [MRNA]</scope>
</reference>
<reference key="4">
    <citation type="submission" date="2000-11" db="EMBL/GenBank/DDBJ databases">
        <title>The murine SLP-65 gene.</title>
        <authorList>
            <person name="Nielsen P.J."/>
            <person name="Guenet J.-L."/>
        </authorList>
    </citation>
    <scope>NUCLEOTIDE SEQUENCE [GENOMIC DNA]</scope>
</reference>
<reference key="5">
    <citation type="journal article" date="2004" name="Genome Res.">
        <title>The status, quality, and expansion of the NIH full-length cDNA project: the Mammalian Gene Collection (MGC).</title>
        <authorList>
            <consortium name="The MGC Project Team"/>
        </authorList>
    </citation>
    <scope>NUCLEOTIDE SEQUENCE [LARGE SCALE MRNA]</scope>
    <source>
        <strain>129</strain>
        <tissue>Mammary tumor</tissue>
    </source>
</reference>
<reference key="6">
    <citation type="journal article" date="2001" name="Eur. J. Immunol.">
        <title>Association of SLP-65/BLNK with the B cell antigen receptor through a non-ITAM tyrosine of Ig-alpha.</title>
        <authorList>
            <person name="Engels N."/>
            <person name="Wollscheid B."/>
            <person name="Wienands J."/>
        </authorList>
    </citation>
    <scope>INTERACTION WITH CD79A</scope>
    <scope>MUTAGENESIS OF ARG-373</scope>
</reference>
<reference key="7">
    <citation type="journal article" date="2002" name="J. Immunol.">
        <title>Receptor-facilitated antigen presentation requires the recruitment of B cell linker protein to Igalpha.</title>
        <authorList>
            <person name="Siemasko K."/>
            <person name="Skaggs B.J."/>
            <person name="Kabak S."/>
            <person name="Williamson E."/>
            <person name="Brown B.K."/>
            <person name="Song W."/>
            <person name="Clark M.R."/>
        </authorList>
    </citation>
    <scope>INTERACTION WITH CD79A</scope>
</reference>
<reference key="8">
    <citation type="journal article" date="2002" name="Mol. Cell. Biol.">
        <title>The direct recruitment of BLNK to immunoglobulin alpha couples the B-cell antigen receptor to distal signaling pathways.</title>
        <authorList>
            <person name="Kabak S."/>
            <person name="Skaggs B.J."/>
            <person name="Gold M.R."/>
            <person name="Affolter M."/>
            <person name="West K.L."/>
            <person name="Foster M.S."/>
            <person name="Siemasko K."/>
            <person name="Chan A.C."/>
            <person name="Aebersold R."/>
            <person name="Clark M.R."/>
        </authorList>
    </citation>
    <scope>INTERACTION WITH CD79A</scope>
</reference>
<reference key="9">
    <citation type="journal article" date="2003" name="Nature">
        <title>Deficiency of the adaptor SLP-65 in pre-B-cell acute lymphoblastic leukaemia.</title>
        <authorList>
            <person name="Jumaa H."/>
            <person name="Bossaller L."/>
            <person name="Portugal K."/>
            <person name="Storch B."/>
            <person name="Lotz M."/>
            <person name="Flemming A."/>
            <person name="Schrappe M."/>
            <person name="Postila V."/>
            <person name="Riikonen P."/>
            <person name="Pelkonen J."/>
            <person name="Niemeyer C.M."/>
            <person name="Reth M."/>
        </authorList>
    </citation>
    <scope>FUNCTION IN PRO-B CELL TO PRE-B CELL TRANSITION</scope>
    <scope>MUTAGENESIS OF TYR-52 AND TYR-96</scope>
</reference>
<reference key="10">
    <citation type="journal article" date="2008" name="EMBO J.">
        <title>The kinase Syk as an adaptor controlling sustained calcium signalling and B-cell development.</title>
        <authorList>
            <person name="Kulathu Y."/>
            <person name="Hobeika E."/>
            <person name="Turchinovich G."/>
            <person name="Reth M."/>
        </authorList>
    </citation>
    <scope>FUNCTION IN SYK ACTIVATION</scope>
    <scope>INTERACTION WITH SYK</scope>
    <scope>MUTAGENESIS OF ARG-373</scope>
</reference>
<reference key="11">
    <citation type="journal article" date="2010" name="Cell">
        <title>A tissue-specific atlas of mouse protein phosphorylation and expression.</title>
        <authorList>
            <person name="Huttlin E.L."/>
            <person name="Jedrychowski M.P."/>
            <person name="Elias J.E."/>
            <person name="Goswami T."/>
            <person name="Rad R."/>
            <person name="Beausoleil S.A."/>
            <person name="Villen J."/>
            <person name="Haas W."/>
            <person name="Sowa M.E."/>
            <person name="Gygi S.P."/>
        </authorList>
    </citation>
    <scope>IDENTIFICATION BY MASS SPECTROMETRY [LARGE SCALE ANALYSIS]</scope>
    <source>
        <tissue>Spleen</tissue>
    </source>
</reference>
<reference key="12">
    <citation type="journal article" date="2011" name="Mol. Cell. Biol.">
        <title>SCIMP, a transmembrane adapter protein involved in major histocompatibility complex class II signaling.</title>
        <authorList>
            <person name="Draber P."/>
            <person name="Vonkova I."/>
            <person name="Stepanek O."/>
            <person name="Hrdinka M."/>
            <person name="Kucova M."/>
            <person name="Skopcova T."/>
            <person name="Otahal P."/>
            <person name="Angelisova P."/>
            <person name="Horejsi V."/>
            <person name="Yeung M."/>
            <person name="Weiss A."/>
            <person name="Brdicka T."/>
        </authorList>
    </citation>
    <scope>INTERACTION WITH SCIMP</scope>
</reference>
<reference key="13">
    <citation type="journal article" date="2017" name="Immunol. Cell Biol.">
        <title>Development of SH2 probes and pull-down assays to detect pathogen-induced, site-specific tyrosine phosphorylation of the TLR adaptor SCIMP.</title>
        <authorList>
            <person name="Luo L."/>
            <person name="Tong S.J."/>
            <person name="Wall A.A."/>
            <person name="Khromykh T."/>
            <person name="Sweet M.J."/>
            <person name="Stow J.L."/>
        </authorList>
    </citation>
    <scope>INTERACTION WITH SCIMP</scope>
</reference>
<reference key="14">
    <citation type="submission" date="2008-04" db="PDB data bank">
        <title>Solution structure of the SH2 domain from mouse B-cell linker protein BLNK.</title>
        <authorList>
            <consortium name="RIKEN structural genomics initiative (RSGI)"/>
        </authorList>
    </citation>
    <scope>STRUCTURE BY NMR OF 328-457</scope>
</reference>
<organism>
    <name type="scientific">Mus musculus</name>
    <name type="common">Mouse</name>
    <dbReference type="NCBI Taxonomy" id="10090"/>
    <lineage>
        <taxon>Eukaryota</taxon>
        <taxon>Metazoa</taxon>
        <taxon>Chordata</taxon>
        <taxon>Craniata</taxon>
        <taxon>Vertebrata</taxon>
        <taxon>Euteleostomi</taxon>
        <taxon>Mammalia</taxon>
        <taxon>Eutheria</taxon>
        <taxon>Euarchontoglires</taxon>
        <taxon>Glires</taxon>
        <taxon>Rodentia</taxon>
        <taxon>Myomorpha</taxon>
        <taxon>Muroidea</taxon>
        <taxon>Muridae</taxon>
        <taxon>Murinae</taxon>
        <taxon>Mus</taxon>
        <taxon>Mus</taxon>
    </lineage>
</organism>
<feature type="chain" id="PRO_0000064941" description="B-cell linker protein">
    <location>
        <begin position="1"/>
        <end position="457"/>
    </location>
</feature>
<feature type="domain" description="SH2" evidence="3">
    <location>
        <begin position="347"/>
        <end position="454"/>
    </location>
</feature>
<feature type="region of interest" description="Disordered" evidence="4">
    <location>
        <begin position="36"/>
        <end position="306"/>
    </location>
</feature>
<feature type="compositionally biased region" description="Acidic residues" evidence="4">
    <location>
        <begin position="57"/>
        <end position="74"/>
    </location>
</feature>
<feature type="compositionally biased region" description="Acidic residues" evidence="4">
    <location>
        <begin position="172"/>
        <end position="187"/>
    </location>
</feature>
<feature type="compositionally biased region" description="Polar residues" evidence="4">
    <location>
        <begin position="207"/>
        <end position="218"/>
    </location>
</feature>
<feature type="compositionally biased region" description="Basic and acidic residues" evidence="4">
    <location>
        <begin position="272"/>
        <end position="290"/>
    </location>
</feature>
<feature type="modified residue" description="Phosphotyrosine; by SYK" evidence="2">
    <location>
        <position position="72"/>
    </location>
</feature>
<feature type="modified residue" description="Phosphotyrosine; by SYK" evidence="2">
    <location>
        <position position="84"/>
    </location>
</feature>
<feature type="modified residue" description="Phosphotyrosine; by SYK" evidence="2">
    <location>
        <position position="96"/>
    </location>
</feature>
<feature type="modified residue" description="Phosphotyrosine; by SYK" evidence="2">
    <location>
        <position position="178"/>
    </location>
</feature>
<feature type="modified residue" description="Phosphotyrosine; by SYK" evidence="2">
    <location>
        <position position="189"/>
    </location>
</feature>
<feature type="mutagenesis site" description="No effect on pre-BCR down-regulation." evidence="8">
    <original>Y</original>
    <variation>F</variation>
    <location>
        <position position="52"/>
    </location>
</feature>
<feature type="mutagenesis site" description="Fails to induce pre-BCR down-regulation, leading to splenomegaly and leukemia." evidence="8">
    <original>Y</original>
    <variation>F</variation>
    <location>
        <position position="96"/>
    </location>
</feature>
<feature type="mutagenesis site" description="Abolishes binding to CD79A and SYK." evidence="5 9">
    <original>R</original>
    <variation>L</variation>
    <location>
        <position position="373"/>
    </location>
</feature>
<feature type="sequence conflict" description="In Ref. 1; AAC40206." evidence="13" ref="1">
    <original>S</original>
    <variation>L</variation>
    <location>
        <position position="333"/>
    </location>
</feature>
<feature type="sequence conflict" description="In Ref. 1; AAC40206." evidence="13" ref="1">
    <original>A</original>
    <variation>G</variation>
    <location>
        <position position="340"/>
    </location>
</feature>
<feature type="sequence conflict" description="In Ref. 1; AAC40206." evidence="13" ref="1">
    <original>S</original>
    <variation>F</variation>
    <location>
        <position position="356"/>
    </location>
</feature>
<feature type="sequence conflict" description="In Ref. 1; AAC40206." evidence="13" ref="1">
    <original>S</original>
    <variation>F</variation>
    <location>
        <position position="376"/>
    </location>
</feature>
<feature type="helix" evidence="14">
    <location>
        <begin position="334"/>
        <end position="340"/>
    </location>
</feature>
<feature type="turn" evidence="14">
    <location>
        <begin position="341"/>
        <end position="344"/>
    </location>
</feature>
<feature type="strand" evidence="14">
    <location>
        <begin position="346"/>
        <end position="351"/>
    </location>
</feature>
<feature type="helix" evidence="14">
    <location>
        <begin position="354"/>
        <end position="364"/>
    </location>
</feature>
<feature type="strand" evidence="14">
    <location>
        <begin position="372"/>
        <end position="374"/>
    </location>
</feature>
<feature type="strand" evidence="14">
    <location>
        <begin position="383"/>
        <end position="390"/>
    </location>
</feature>
<feature type="strand" evidence="14">
    <location>
        <begin position="393"/>
        <end position="399"/>
    </location>
</feature>
<feature type="turn" evidence="14">
    <location>
        <begin position="403"/>
        <end position="406"/>
    </location>
</feature>
<feature type="strand" evidence="14">
    <location>
        <begin position="410"/>
        <end position="412"/>
    </location>
</feature>
<feature type="strand" evidence="14">
    <location>
        <begin position="420"/>
        <end position="422"/>
    </location>
</feature>
<feature type="helix" evidence="14">
    <location>
        <begin position="423"/>
        <end position="432"/>
    </location>
</feature>
<feature type="strand" evidence="14">
    <location>
        <begin position="440"/>
        <end position="442"/>
    </location>
</feature>
<evidence type="ECO:0000250" key="1"/>
<evidence type="ECO:0000250" key="2">
    <source>
        <dbReference type="UniProtKB" id="Q8WV28"/>
    </source>
</evidence>
<evidence type="ECO:0000255" key="3">
    <source>
        <dbReference type="PROSITE-ProRule" id="PRU00191"/>
    </source>
</evidence>
<evidence type="ECO:0000256" key="4">
    <source>
        <dbReference type="SAM" id="MobiDB-lite"/>
    </source>
</evidence>
<evidence type="ECO:0000269" key="5">
    <source>
    </source>
</evidence>
<evidence type="ECO:0000269" key="6">
    <source>
    </source>
</evidence>
<evidence type="ECO:0000269" key="7">
    <source>
    </source>
</evidence>
<evidence type="ECO:0000269" key="8">
    <source>
    </source>
</evidence>
<evidence type="ECO:0000269" key="9">
    <source>
    </source>
</evidence>
<evidence type="ECO:0000269" key="10">
    <source>
    </source>
</evidence>
<evidence type="ECO:0000269" key="11">
    <source>
    </source>
</evidence>
<evidence type="ECO:0000269" key="12">
    <source>
    </source>
</evidence>
<evidence type="ECO:0000305" key="13"/>
<evidence type="ECO:0007829" key="14">
    <source>
        <dbReference type="PDB" id="2EO6"/>
    </source>
</evidence>
<protein>
    <recommendedName>
        <fullName>B-cell linker protein</fullName>
    </recommendedName>
    <alternativeName>
        <fullName>B-cell adapter containing a SH2 domain protein</fullName>
    </alternativeName>
    <alternativeName>
        <fullName>B-cell adapter containing a Src homology 2 domain protein</fullName>
    </alternativeName>
    <alternativeName>
        <fullName>Cytoplasmic adapter protein</fullName>
    </alternativeName>
    <alternativeName>
        <fullName>Lymphocyte antigen 57</fullName>
    </alternativeName>
    <alternativeName>
        <fullName>Src homology 2 domain-containing leukocyte protein of 65 kDa</fullName>
        <shortName>Slp-65</shortName>
    </alternativeName>
</protein>
<gene>
    <name type="primary">Blnk</name>
    <name type="synonym">Bash</name>
    <name type="synonym">Ly57</name>
    <name type="synonym">Slp65</name>
</gene>